<feature type="chain" id="PRO_0000407677" description="Methionine aminopeptidase 2">
    <location>
        <begin position="1"/>
        <end position="421"/>
    </location>
</feature>
<feature type="region of interest" description="Disordered" evidence="3">
    <location>
        <begin position="1"/>
        <end position="53"/>
    </location>
</feature>
<feature type="compositionally biased region" description="Basic and acidic residues" evidence="3">
    <location>
        <begin position="28"/>
        <end position="40"/>
    </location>
</feature>
<feature type="compositionally biased region" description="Basic residues" evidence="3">
    <location>
        <begin position="41"/>
        <end position="53"/>
    </location>
</feature>
<feature type="binding site" evidence="2">
    <location>
        <position position="174"/>
    </location>
    <ligand>
        <name>substrate</name>
    </ligand>
</feature>
<feature type="binding site" evidence="2">
    <location>
        <position position="194"/>
    </location>
    <ligand>
        <name>a divalent metal cation</name>
        <dbReference type="ChEBI" id="CHEBI:60240"/>
        <label>1</label>
    </ligand>
</feature>
<feature type="binding site" evidence="2">
    <location>
        <position position="205"/>
    </location>
    <ligand>
        <name>a divalent metal cation</name>
        <dbReference type="ChEBI" id="CHEBI:60240"/>
        <label>1</label>
    </ligand>
</feature>
<feature type="binding site" evidence="2">
    <location>
        <position position="205"/>
    </location>
    <ligand>
        <name>a divalent metal cation</name>
        <dbReference type="ChEBI" id="CHEBI:60240"/>
        <label>2</label>
        <note>catalytic</note>
    </ligand>
</feature>
<feature type="binding site" evidence="2">
    <location>
        <position position="274"/>
    </location>
    <ligand>
        <name>a divalent metal cation</name>
        <dbReference type="ChEBI" id="CHEBI:60240"/>
        <label>2</label>
        <note>catalytic</note>
    </ligand>
</feature>
<feature type="binding site" evidence="2">
    <location>
        <position position="282"/>
    </location>
    <ligand>
        <name>substrate</name>
    </ligand>
</feature>
<feature type="binding site" evidence="2">
    <location>
        <position position="307"/>
    </location>
    <ligand>
        <name>a divalent metal cation</name>
        <dbReference type="ChEBI" id="CHEBI:60240"/>
        <label>2</label>
        <note>catalytic</note>
    </ligand>
</feature>
<feature type="binding site" evidence="2">
    <location>
        <position position="402"/>
    </location>
    <ligand>
        <name>a divalent metal cation</name>
        <dbReference type="ChEBI" id="CHEBI:60240"/>
        <label>1</label>
    </ligand>
</feature>
<feature type="binding site" evidence="2">
    <location>
        <position position="402"/>
    </location>
    <ligand>
        <name>a divalent metal cation</name>
        <dbReference type="ChEBI" id="CHEBI:60240"/>
        <label>2</label>
        <note>catalytic</note>
    </ligand>
</feature>
<feature type="modified residue" description="Phosphoserine" evidence="1">
    <location>
        <position position="35"/>
    </location>
</feature>
<evidence type="ECO:0000250" key="1">
    <source>
        <dbReference type="UniProtKB" id="P38174"/>
    </source>
</evidence>
<evidence type="ECO:0000255" key="2">
    <source>
        <dbReference type="HAMAP-Rule" id="MF_03175"/>
    </source>
</evidence>
<evidence type="ECO:0000256" key="3">
    <source>
        <dbReference type="SAM" id="MobiDB-lite"/>
    </source>
</evidence>
<keyword id="KW-0031">Aminopeptidase</keyword>
<keyword id="KW-0963">Cytoplasm</keyword>
<keyword id="KW-0378">Hydrolase</keyword>
<keyword id="KW-0479">Metal-binding</keyword>
<keyword id="KW-0597">Phosphoprotein</keyword>
<keyword id="KW-0645">Protease</keyword>
<gene>
    <name evidence="2" type="primary">MAP2</name>
    <name type="ORF">SCRG_03049</name>
</gene>
<comment type="function">
    <text evidence="2">Cotranslationally removes the N-terminal methionine from nascent proteins. The N-terminal methionine is often cleaved when the second residue in the primary sequence is small and uncharged (Met-Ala-, Cys, Gly, Pro, Ser, Thr, or Val).</text>
</comment>
<comment type="catalytic activity">
    <reaction evidence="2">
        <text>Release of N-terminal amino acids, preferentially methionine, from peptides and arylamides.</text>
        <dbReference type="EC" id="3.4.11.18"/>
    </reaction>
</comment>
<comment type="cofactor">
    <cofactor evidence="2">
        <name>Co(2+)</name>
        <dbReference type="ChEBI" id="CHEBI:48828"/>
    </cofactor>
    <cofactor evidence="2">
        <name>Zn(2+)</name>
        <dbReference type="ChEBI" id="CHEBI:29105"/>
    </cofactor>
    <cofactor evidence="2">
        <name>Mn(2+)</name>
        <dbReference type="ChEBI" id="CHEBI:29035"/>
    </cofactor>
    <cofactor evidence="2">
        <name>Fe(2+)</name>
        <dbReference type="ChEBI" id="CHEBI:29033"/>
    </cofactor>
    <text evidence="2">Binds 2 divalent metal cations per subunit. Has a high-affinity and a low affinity metal-binding site. The true nature of the physiological cofactor is under debate. The enzyme is active with cobalt, zinc, manganese or divalent iron ions. Most likely, methionine aminopeptidases function as mononuclear Fe(2+)-metalloproteases under physiological conditions, and the catalytically relevant metal-binding site has been assigned to the histidine-containing high-affinity site.</text>
</comment>
<comment type="subcellular location">
    <subcellularLocation>
        <location evidence="2">Cytoplasm</location>
    </subcellularLocation>
</comment>
<comment type="similarity">
    <text evidence="2">Belongs to the peptidase M24A family. Methionine aminopeptidase eukaryotic type 2 subfamily.</text>
</comment>
<accession>B3LNM2</accession>
<dbReference type="EC" id="3.4.11.18" evidence="2"/>
<dbReference type="EMBL" id="CH408048">
    <property type="protein sequence ID" value="EDV12175.1"/>
    <property type="molecule type" value="Genomic_DNA"/>
</dbReference>
<dbReference type="SMR" id="B3LNM2"/>
<dbReference type="HOGENOM" id="CLU_015857_7_1_1"/>
<dbReference type="OrthoDB" id="30534at4893"/>
<dbReference type="Proteomes" id="UP000008335">
    <property type="component" value="Unassembled WGS sequence"/>
</dbReference>
<dbReference type="GO" id="GO:0005737">
    <property type="term" value="C:cytoplasm"/>
    <property type="evidence" value="ECO:0007669"/>
    <property type="project" value="UniProtKB-SubCell"/>
</dbReference>
<dbReference type="GO" id="GO:0004239">
    <property type="term" value="F:initiator methionyl aminopeptidase activity"/>
    <property type="evidence" value="ECO:0007669"/>
    <property type="project" value="UniProtKB-UniRule"/>
</dbReference>
<dbReference type="GO" id="GO:0046872">
    <property type="term" value="F:metal ion binding"/>
    <property type="evidence" value="ECO:0007669"/>
    <property type="project" value="UniProtKB-UniRule"/>
</dbReference>
<dbReference type="GO" id="GO:0070006">
    <property type="term" value="F:metalloaminopeptidase activity"/>
    <property type="evidence" value="ECO:0007669"/>
    <property type="project" value="UniProtKB-UniRule"/>
</dbReference>
<dbReference type="GO" id="GO:0006508">
    <property type="term" value="P:proteolysis"/>
    <property type="evidence" value="ECO:0007669"/>
    <property type="project" value="UniProtKB-KW"/>
</dbReference>
<dbReference type="CDD" id="cd01088">
    <property type="entry name" value="MetAP2"/>
    <property type="match status" value="1"/>
</dbReference>
<dbReference type="FunFam" id="1.10.10.10:FF:000370">
    <property type="entry name" value="Methionine aminopeptidase 2"/>
    <property type="match status" value="1"/>
</dbReference>
<dbReference type="Gene3D" id="3.90.230.10">
    <property type="entry name" value="Creatinase/methionine aminopeptidase superfamily"/>
    <property type="match status" value="1"/>
</dbReference>
<dbReference type="Gene3D" id="1.10.10.10">
    <property type="entry name" value="Winged helix-like DNA-binding domain superfamily/Winged helix DNA-binding domain"/>
    <property type="match status" value="1"/>
</dbReference>
<dbReference type="HAMAP" id="MF_03175">
    <property type="entry name" value="MetAP_2_euk"/>
    <property type="match status" value="1"/>
</dbReference>
<dbReference type="InterPro" id="IPR036005">
    <property type="entry name" value="Creatinase/aminopeptidase-like"/>
</dbReference>
<dbReference type="InterPro" id="IPR050247">
    <property type="entry name" value="Met_Aminopeptidase_Type2"/>
</dbReference>
<dbReference type="InterPro" id="IPR000994">
    <property type="entry name" value="Pept_M24"/>
</dbReference>
<dbReference type="InterPro" id="IPR001714">
    <property type="entry name" value="Pept_M24_MAP"/>
</dbReference>
<dbReference type="InterPro" id="IPR002468">
    <property type="entry name" value="Pept_M24A_MAP2"/>
</dbReference>
<dbReference type="InterPro" id="IPR018349">
    <property type="entry name" value="Pept_M24A_MAP2_BS"/>
</dbReference>
<dbReference type="InterPro" id="IPR036388">
    <property type="entry name" value="WH-like_DNA-bd_sf"/>
</dbReference>
<dbReference type="InterPro" id="IPR036390">
    <property type="entry name" value="WH_DNA-bd_sf"/>
</dbReference>
<dbReference type="NCBIfam" id="TIGR00501">
    <property type="entry name" value="met_pdase_II"/>
    <property type="match status" value="1"/>
</dbReference>
<dbReference type="PANTHER" id="PTHR45777">
    <property type="entry name" value="METHIONINE AMINOPEPTIDASE 2"/>
    <property type="match status" value="1"/>
</dbReference>
<dbReference type="PANTHER" id="PTHR45777:SF2">
    <property type="entry name" value="METHIONINE AMINOPEPTIDASE 2"/>
    <property type="match status" value="1"/>
</dbReference>
<dbReference type="Pfam" id="PF00557">
    <property type="entry name" value="Peptidase_M24"/>
    <property type="match status" value="1"/>
</dbReference>
<dbReference type="PRINTS" id="PR00599">
    <property type="entry name" value="MAPEPTIDASE"/>
</dbReference>
<dbReference type="SUPFAM" id="SSF55920">
    <property type="entry name" value="Creatinase/aminopeptidase"/>
    <property type="match status" value="1"/>
</dbReference>
<dbReference type="SUPFAM" id="SSF46785">
    <property type="entry name" value="Winged helix' DNA-binding domain"/>
    <property type="match status" value="1"/>
</dbReference>
<dbReference type="PROSITE" id="PS01202">
    <property type="entry name" value="MAP_2"/>
    <property type="match status" value="1"/>
</dbReference>
<protein>
    <recommendedName>
        <fullName evidence="2">Methionine aminopeptidase 2</fullName>
        <shortName evidence="2">MAP 2</shortName>
        <shortName evidence="2">MetAP 2</shortName>
        <ecNumber evidence="2">3.4.11.18</ecNumber>
    </recommendedName>
    <alternativeName>
        <fullName evidence="2">Peptidase M</fullName>
    </alternativeName>
</protein>
<reference key="1">
    <citation type="submission" date="2005-03" db="EMBL/GenBank/DDBJ databases">
        <title>Annotation of the Saccharomyces cerevisiae RM11-1a genome.</title>
        <authorList>
            <consortium name="The Broad Institute Genome Sequencing Platform"/>
            <person name="Birren B.W."/>
            <person name="Lander E.S."/>
            <person name="Galagan J.E."/>
            <person name="Nusbaum C."/>
            <person name="Devon K."/>
            <person name="Cuomo C."/>
            <person name="Jaffe D.B."/>
            <person name="Butler J."/>
            <person name="Alvarez P."/>
            <person name="Gnerre S."/>
            <person name="Grabherr M."/>
            <person name="Kleber M."/>
            <person name="Mauceli E.W."/>
            <person name="Brockman W."/>
            <person name="MacCallum I.A."/>
            <person name="Rounsley S."/>
            <person name="Young S.K."/>
            <person name="LaButti K."/>
            <person name="Pushparaj V."/>
            <person name="DeCaprio D."/>
            <person name="Crawford M."/>
            <person name="Koehrsen M."/>
            <person name="Engels R."/>
            <person name="Montgomery P."/>
            <person name="Pearson M."/>
            <person name="Howarth C."/>
            <person name="Larson L."/>
            <person name="Luoma S."/>
            <person name="White J."/>
            <person name="O'Leary S."/>
            <person name="Kodira C.D."/>
            <person name="Zeng Q."/>
            <person name="Yandava C."/>
            <person name="Alvarado L."/>
            <person name="Pratt S."/>
            <person name="Kruglyak L."/>
        </authorList>
    </citation>
    <scope>NUCLEOTIDE SEQUENCE [LARGE SCALE GENOMIC DNA]</scope>
    <source>
        <strain>RM11-1a</strain>
    </source>
</reference>
<proteinExistence type="inferred from homology"/>
<name>MAP2_YEAS1</name>
<sequence>MTDAEIENSPASDLKELNLENEGVEQQDQAKADESDPVESKKKKNKKKKKKKSNVKKIELLFPDGKYPEGAWMDYHQDFNLQRTTDEESRYLKRDLERAEHWNDVRKGAEIHRRVRRAIKDRIVPGMKLMDIADMIENTTRKYTGAENLLAMEDPKSQGIGFPTGLSLNHCAAHFTPNAGDKTVLKYEDVMKVDYGVQVNGNIIDSAFTVSFDPQYDNLLAAVKDATYTGIKEAGIDVRLTDIGEAIQEVMESYEVEINGETYQVKPCRNLCGHSIAPYRIHGGKSVPIVKNGDTTKMEEGEHFAIETFGSTGRGYVTAGGEVSHYARSAEDHQVMPTLDSAKNLLKTIDRNFGTLPFCRRYLDRLGQEKYLFALNNLVRHGLVQDYPPLNDIPGSYTAQFEHTILLHAHKKEVVSKGDDY</sequence>
<organism>
    <name type="scientific">Saccharomyces cerevisiae (strain RM11-1a)</name>
    <name type="common">Baker's yeast</name>
    <dbReference type="NCBI Taxonomy" id="285006"/>
    <lineage>
        <taxon>Eukaryota</taxon>
        <taxon>Fungi</taxon>
        <taxon>Dikarya</taxon>
        <taxon>Ascomycota</taxon>
        <taxon>Saccharomycotina</taxon>
        <taxon>Saccharomycetes</taxon>
        <taxon>Saccharomycetales</taxon>
        <taxon>Saccharomycetaceae</taxon>
        <taxon>Saccharomyces</taxon>
    </lineage>
</organism>